<organismHost>
    <name type="scientific">Microplitis demolitor</name>
    <name type="common">Parasitoid wasp</name>
    <dbReference type="NCBI Taxonomy" id="69319"/>
</organismHost>
<keyword id="KW-1185">Reference proteome</keyword>
<gene>
    <name type="primary">K1</name>
</gene>
<name>YK1_MDBVW</name>
<evidence type="ECO:0000256" key="1">
    <source>
        <dbReference type="SAM" id="MobiDB-lite"/>
    </source>
</evidence>
<reference key="1">
    <citation type="journal article" date="2006" name="Virology">
        <title>Polydnavirus genomes reflect their dual roles as mutualists and pathogens.</title>
        <authorList>
            <person name="Webb B.A."/>
            <person name="Strand M.R."/>
            <person name="Dickey S.E."/>
            <person name="Beck M.H."/>
            <person name="Hilgarth R.S."/>
            <person name="Barney W.E."/>
            <person name="Kadash K."/>
            <person name="Kroemer J.A."/>
            <person name="Lindstrom K.G."/>
            <person name="Rattanadechakul W."/>
            <person name="Shelby K.S."/>
            <person name="Thoetkiattikul H."/>
            <person name="Turnbull M.W."/>
            <person name="Witherell R.A."/>
        </authorList>
    </citation>
    <scope>NUCLEOTIDE SEQUENCE [GENOMIC DNA]</scope>
</reference>
<proteinExistence type="predicted"/>
<organism>
    <name type="scientific">Microplitis demolitor bracovirus (isolate Webb)</name>
    <name type="common">MdBV</name>
    <dbReference type="NCBI Taxonomy" id="654919"/>
    <lineage>
        <taxon>Viruses</taxon>
        <taxon>Viruses incertae sedis</taxon>
        <taxon>Polydnaviriformidae</taxon>
        <taxon>Bracoviriform</taxon>
        <taxon>Microplitis demolitor bracovirus</taxon>
    </lineage>
</organism>
<sequence>MTSSSSPSSSSSKCSNGASVCFIPKEWNDYPTSTLECVLTTDIKEHMKNYNEVVGAPISVGGVSAKLEFFGPNIWMRKDGDEKSKPNSKDYASRPIRDHSKI</sequence>
<accession>Q5I136</accession>
<dbReference type="EMBL" id="AY875687">
    <property type="protein sequence ID" value="AAW51796.1"/>
    <property type="molecule type" value="Genomic_DNA"/>
</dbReference>
<dbReference type="RefSeq" id="YP_239392.1">
    <property type="nucleotide sequence ID" value="NC_007037.1"/>
</dbReference>
<dbReference type="KEGG" id="vg:5075827"/>
<dbReference type="Proteomes" id="UP000008168">
    <property type="component" value="Genome"/>
</dbReference>
<protein>
    <recommendedName>
        <fullName>Uncharacterized protein K1</fullName>
    </recommendedName>
</protein>
<feature type="chain" id="PRO_0000405384" description="Uncharacterized protein K1">
    <location>
        <begin position="1"/>
        <end position="102"/>
    </location>
</feature>
<feature type="region of interest" description="Disordered" evidence="1">
    <location>
        <begin position="77"/>
        <end position="102"/>
    </location>
</feature>